<proteinExistence type="inferred from homology"/>
<reference key="1">
    <citation type="journal article" date="1992" name="Plant Mol. Biol.">
        <title>An equivalent to bacterial ompR genes is encoded on the plastid genome of red algae.</title>
        <authorList>
            <person name="Kessler U."/>
            <person name="Maid U."/>
            <person name="Zetsche K."/>
        </authorList>
    </citation>
    <scope>NUCLEOTIDE SEQUENCE [GENOMIC DNA]</scope>
    <source>
        <strain>14-1-1 / Isolate 107.79/Goettingen</strain>
    </source>
</reference>
<reference key="2">
    <citation type="journal article" date="1992" name="Curr. Genet.">
        <title>Structure and expression of a plastid-encoded groEL homologous heat-shock gene in a thermophilic unicellular red alga.</title>
        <authorList>
            <person name="Maid U."/>
            <person name="Steinmueller R."/>
            <person name="Zetsche K."/>
        </authorList>
    </citation>
    <scope>NUCLEOTIDE SEQUENCE [GENOMIC DNA]</scope>
</reference>
<name>CH60_GALSU</name>
<evidence type="ECO:0000255" key="1">
    <source>
        <dbReference type="HAMAP-Rule" id="MF_00600"/>
    </source>
</evidence>
<comment type="function">
    <text evidence="1">Together with its co-chaperonin GroES, plays an essential role in assisting protein folding. The GroEL-GroES system forms a nano-cage that allows encapsulation of the non-native substrate proteins and provides a physical environment optimized to promote and accelerate protein folding.</text>
</comment>
<comment type="catalytic activity">
    <reaction evidence="1">
        <text>ATP + H2O + a folded polypeptide = ADP + phosphate + an unfolded polypeptide.</text>
        <dbReference type="EC" id="5.6.1.7"/>
    </reaction>
</comment>
<comment type="subunit">
    <text evidence="1">Forms a cylinder of 14 subunits composed of two heptameric rings stacked back-to-back. Interacts with the co-chaperonin GroES.</text>
</comment>
<comment type="subcellular location">
    <subcellularLocation>
        <location evidence="1">Plastid</location>
        <location evidence="1">Chloroplast</location>
    </subcellularLocation>
</comment>
<comment type="similarity">
    <text evidence="1">Belongs to the chaperonin (HSP60) family.</text>
</comment>
<gene>
    <name evidence="1" type="primary">groEL</name>
    <name evidence="1" type="synonym">groL</name>
</gene>
<protein>
    <recommendedName>
        <fullName evidence="1">Chaperonin GroEL, chloroplastic</fullName>
        <ecNumber evidence="1">5.6.1.7</ecNumber>
    </recommendedName>
    <alternativeName>
        <fullName evidence="1">60 kDa chaperonin</fullName>
    </alternativeName>
    <alternativeName>
        <fullName evidence="1">Chaperonin-60</fullName>
        <shortName evidence="1">Cpn60</shortName>
    </alternativeName>
</protein>
<sequence>MTKQILYQENARKALEKGIDILAEAVSVTLGPKGRNVVIEKKYGPPQIINDGVTIAKEIELEDHIENTGVALIRQAASKTNDVAGDGTTTSTVLAHAIVKQGMRNVAAGANPIALKRGIDKATQFIINKISEYSRPVEDNKAITQVATISSGNDENIGKMIADAIEKVGREGVISIEEGKSTTTELEIKEGMKFERGYISPYFVTDSDRMEVVQENASVLITDKKITLVQQDLLPVLEQIAKTNKPLLIIAEDIEKEALATLIVNKLRGILNVVAVKAPGFGDRRKSILEDIAILTGGQLITEDAGLSLDKVDLSMLGQANKVIVNKESTTIISNANENNVKARCEQIRKQIEITDSSYEKEKLQERLAKLAGGIAVIKVGAATETEMKDKKLRLEDAINATKAAIEEGIVPGGGATLVHLANDLFNWAKGVLKEDELIGALIVEKSITAPLKRIVQNEGKNGAIVVDEIKNLDFSIGYDASTSKFVNMYESGIIDPAKVTRSALQNASSIAGMILTTECLVVDEMNRNMEVRK</sequence>
<geneLocation type="chloroplast"/>
<accession>P28256</accession>
<keyword id="KW-0067">ATP-binding</keyword>
<keyword id="KW-0143">Chaperone</keyword>
<keyword id="KW-0150">Chloroplast</keyword>
<keyword id="KW-0413">Isomerase</keyword>
<keyword id="KW-0547">Nucleotide-binding</keyword>
<keyword id="KW-0934">Plastid</keyword>
<dbReference type="EC" id="5.6.1.7" evidence="1"/>
<dbReference type="EMBL" id="X62578">
    <property type="protein sequence ID" value="CAA44463.1"/>
    <property type="molecule type" value="Genomic_DNA"/>
</dbReference>
<dbReference type="SMR" id="P28256"/>
<dbReference type="eggNOG" id="KOG0356">
    <property type="taxonomic scope" value="Eukaryota"/>
</dbReference>
<dbReference type="GO" id="GO:0009507">
    <property type="term" value="C:chloroplast"/>
    <property type="evidence" value="ECO:0007669"/>
    <property type="project" value="UniProtKB-SubCell"/>
</dbReference>
<dbReference type="GO" id="GO:0005524">
    <property type="term" value="F:ATP binding"/>
    <property type="evidence" value="ECO:0007669"/>
    <property type="project" value="UniProtKB-UniRule"/>
</dbReference>
<dbReference type="GO" id="GO:0140662">
    <property type="term" value="F:ATP-dependent protein folding chaperone"/>
    <property type="evidence" value="ECO:0007669"/>
    <property type="project" value="InterPro"/>
</dbReference>
<dbReference type="GO" id="GO:0016853">
    <property type="term" value="F:isomerase activity"/>
    <property type="evidence" value="ECO:0007669"/>
    <property type="project" value="UniProtKB-KW"/>
</dbReference>
<dbReference type="GO" id="GO:0051082">
    <property type="term" value="F:unfolded protein binding"/>
    <property type="evidence" value="ECO:0007669"/>
    <property type="project" value="UniProtKB-UniRule"/>
</dbReference>
<dbReference type="GO" id="GO:0042026">
    <property type="term" value="P:protein refolding"/>
    <property type="evidence" value="ECO:0007669"/>
    <property type="project" value="UniProtKB-UniRule"/>
</dbReference>
<dbReference type="CDD" id="cd03344">
    <property type="entry name" value="GroEL"/>
    <property type="match status" value="1"/>
</dbReference>
<dbReference type="FunFam" id="3.50.7.10:FF:000001">
    <property type="entry name" value="60 kDa chaperonin"/>
    <property type="match status" value="1"/>
</dbReference>
<dbReference type="Gene3D" id="3.50.7.10">
    <property type="entry name" value="GroEL"/>
    <property type="match status" value="1"/>
</dbReference>
<dbReference type="Gene3D" id="1.10.560.10">
    <property type="entry name" value="GroEL-like equatorial domain"/>
    <property type="match status" value="1"/>
</dbReference>
<dbReference type="Gene3D" id="3.30.260.10">
    <property type="entry name" value="TCP-1-like chaperonin intermediate domain"/>
    <property type="match status" value="1"/>
</dbReference>
<dbReference type="HAMAP" id="MF_00600">
    <property type="entry name" value="CH60"/>
    <property type="match status" value="1"/>
</dbReference>
<dbReference type="InterPro" id="IPR018370">
    <property type="entry name" value="Chaperonin_Cpn60_CS"/>
</dbReference>
<dbReference type="InterPro" id="IPR001844">
    <property type="entry name" value="Cpn60/GroEL"/>
</dbReference>
<dbReference type="InterPro" id="IPR002423">
    <property type="entry name" value="Cpn60/GroEL/TCP-1"/>
</dbReference>
<dbReference type="InterPro" id="IPR027409">
    <property type="entry name" value="GroEL-like_apical_dom_sf"/>
</dbReference>
<dbReference type="InterPro" id="IPR027413">
    <property type="entry name" value="GROEL-like_equatorial_sf"/>
</dbReference>
<dbReference type="InterPro" id="IPR027410">
    <property type="entry name" value="TCP-1-like_intermed_sf"/>
</dbReference>
<dbReference type="NCBIfam" id="TIGR02348">
    <property type="entry name" value="GroEL"/>
    <property type="match status" value="1"/>
</dbReference>
<dbReference type="NCBIfam" id="NF000592">
    <property type="entry name" value="PRK00013.1"/>
    <property type="match status" value="1"/>
</dbReference>
<dbReference type="NCBIfam" id="NF009487">
    <property type="entry name" value="PRK12849.1"/>
    <property type="match status" value="1"/>
</dbReference>
<dbReference type="NCBIfam" id="NF009488">
    <property type="entry name" value="PRK12850.1"/>
    <property type="match status" value="1"/>
</dbReference>
<dbReference type="NCBIfam" id="NF009489">
    <property type="entry name" value="PRK12851.1"/>
    <property type="match status" value="1"/>
</dbReference>
<dbReference type="PANTHER" id="PTHR45633">
    <property type="entry name" value="60 KDA HEAT SHOCK PROTEIN, MITOCHONDRIAL"/>
    <property type="match status" value="1"/>
</dbReference>
<dbReference type="Pfam" id="PF00118">
    <property type="entry name" value="Cpn60_TCP1"/>
    <property type="match status" value="1"/>
</dbReference>
<dbReference type="PRINTS" id="PR00298">
    <property type="entry name" value="CHAPERONIN60"/>
</dbReference>
<dbReference type="SUPFAM" id="SSF52029">
    <property type="entry name" value="GroEL apical domain-like"/>
    <property type="match status" value="1"/>
</dbReference>
<dbReference type="SUPFAM" id="SSF48592">
    <property type="entry name" value="GroEL equatorial domain-like"/>
    <property type="match status" value="2"/>
</dbReference>
<dbReference type="PROSITE" id="PS00296">
    <property type="entry name" value="CHAPERONINS_CPN60"/>
    <property type="match status" value="1"/>
</dbReference>
<feature type="chain" id="PRO_0000063623" description="Chaperonin GroEL, chloroplastic">
    <location>
        <begin position="1"/>
        <end position="534"/>
    </location>
</feature>
<feature type="binding site" evidence="1">
    <location>
        <begin position="29"/>
        <end position="32"/>
    </location>
    <ligand>
        <name>ATP</name>
        <dbReference type="ChEBI" id="CHEBI:30616"/>
    </ligand>
</feature>
<feature type="binding site" evidence="1">
    <location>
        <begin position="86"/>
        <end position="90"/>
    </location>
    <ligand>
        <name>ATP</name>
        <dbReference type="ChEBI" id="CHEBI:30616"/>
    </ligand>
</feature>
<feature type="binding site" evidence="1">
    <location>
        <position position="414"/>
    </location>
    <ligand>
        <name>ATP</name>
        <dbReference type="ChEBI" id="CHEBI:30616"/>
    </ligand>
</feature>
<feature type="binding site" evidence="1">
    <location>
        <position position="496"/>
    </location>
    <ligand>
        <name>ATP</name>
        <dbReference type="ChEBI" id="CHEBI:30616"/>
    </ligand>
</feature>
<organism>
    <name type="scientific">Galdieria sulphuraria</name>
    <name type="common">Red alga</name>
    <dbReference type="NCBI Taxonomy" id="130081"/>
    <lineage>
        <taxon>Eukaryota</taxon>
        <taxon>Rhodophyta</taxon>
        <taxon>Bangiophyceae</taxon>
        <taxon>Galdieriales</taxon>
        <taxon>Galdieriaceae</taxon>
        <taxon>Galdieria</taxon>
    </lineage>
</organism>